<reference key="1">
    <citation type="journal article" date="2001" name="Science">
        <title>Complete genome sequence of a virulent isolate of Streptococcus pneumoniae.</title>
        <authorList>
            <person name="Tettelin H."/>
            <person name="Nelson K.E."/>
            <person name="Paulsen I.T."/>
            <person name="Eisen J.A."/>
            <person name="Read T.D."/>
            <person name="Peterson S.N."/>
            <person name="Heidelberg J.F."/>
            <person name="DeBoy R.T."/>
            <person name="Haft D.H."/>
            <person name="Dodson R.J."/>
            <person name="Durkin A.S."/>
            <person name="Gwinn M.L."/>
            <person name="Kolonay J.F."/>
            <person name="Nelson W.C."/>
            <person name="Peterson J.D."/>
            <person name="Umayam L.A."/>
            <person name="White O."/>
            <person name="Salzberg S.L."/>
            <person name="Lewis M.R."/>
            <person name="Radune D."/>
            <person name="Holtzapple E.K."/>
            <person name="Khouri H.M."/>
            <person name="Wolf A.M."/>
            <person name="Utterback T.R."/>
            <person name="Hansen C.L."/>
            <person name="McDonald L.A."/>
            <person name="Feldblyum T.V."/>
            <person name="Angiuoli S.V."/>
            <person name="Dickinson T."/>
            <person name="Hickey E.K."/>
            <person name="Holt I.E."/>
            <person name="Loftus B.J."/>
            <person name="Yang F."/>
            <person name="Smith H.O."/>
            <person name="Venter J.C."/>
            <person name="Dougherty B.A."/>
            <person name="Morrison D.A."/>
            <person name="Hollingshead S.K."/>
            <person name="Fraser C.M."/>
        </authorList>
    </citation>
    <scope>NUCLEOTIDE SEQUENCE [LARGE SCALE GENOMIC DNA]</scope>
    <source>
        <strain>ATCC BAA-334 / TIGR4</strain>
    </source>
</reference>
<sequence>MSEKNFYITTPIYYPSGKLHIGSAYTTIACDVLARYKRLMGYDVFYLTGLDEHGQKIQQKAEEAGITPQAYVDGMAVGVKELWQLLDISYDKFIRTTDDYHEKVVAQVFERLLAQDDIYLGEYSGWYSVSDEEFFTESQLAEVFRDEAGNVTGGIAPSGHEVEWVSEESYFLRLSKYQDRLVEFFKAHPEFITPDGRLNEMLRNFIEPGLEDLAVSRTTFTWGVPVPSNPKHVVYVWIDALLNYATALGYAQDEHGNFDKFWNGTVFHMVGKDILRFHSIYWPILLMMLDVKLPDRLIAHGWFVMKDGKMSKSKGNVVYPEMLVERYGLDPLRYYLMRNLPVGSDGTFTPEDYVGRINYELANDLGNLLNRTVSMINKYFDGQIPAYVEGVTEFDHVLAEVAEQSIADFHTHMEAVDYPRALEAVWTLISRTNKYIDETAPWVLAKDEALRDQLASVMSHLAASIRVVAHLIEPFMMETSRAVLTQLGLEEVSSLENLSLADFPADVTVVAKGTPIFPRLNMEEEIAYIKEQMEGNKPAVEKEWNPDEVELKLNKDEIKFEDFDKVEIRVAEVKEVSKVEGSDKLLQFRLDAGDGEDRQILSGIAKYYPNEQELVGKKVQIVANLKPRKMMKKYVSQGMILSAEHDGKLTLLTVDPAVPNGSVIG</sequence>
<name>SYM_STRPN</name>
<gene>
    <name type="primary">metG</name>
    <name type="synonym">metS</name>
    <name type="ordered locus">SP_0788</name>
</gene>
<dbReference type="EC" id="6.1.1.10"/>
<dbReference type="EMBL" id="AE005672">
    <property type="protein sequence ID" value="AAK74925.1"/>
    <property type="molecule type" value="Genomic_DNA"/>
</dbReference>
<dbReference type="PIR" id="D95091">
    <property type="entry name" value="D95091"/>
</dbReference>
<dbReference type="RefSeq" id="WP_001291370.1">
    <property type="nucleotide sequence ID" value="NZ_CP155539.1"/>
</dbReference>
<dbReference type="SMR" id="P67580"/>
<dbReference type="PaxDb" id="170187-SP_0788"/>
<dbReference type="EnsemblBacteria" id="AAK74925">
    <property type="protein sequence ID" value="AAK74925"/>
    <property type="gene ID" value="SP_0788"/>
</dbReference>
<dbReference type="KEGG" id="spn:SP_0788"/>
<dbReference type="eggNOG" id="COG0073">
    <property type="taxonomic scope" value="Bacteria"/>
</dbReference>
<dbReference type="eggNOG" id="COG0143">
    <property type="taxonomic scope" value="Bacteria"/>
</dbReference>
<dbReference type="PhylomeDB" id="P67580"/>
<dbReference type="BioCyc" id="SPNE170187:G1FZB-805-MONOMER"/>
<dbReference type="Proteomes" id="UP000000585">
    <property type="component" value="Chromosome"/>
</dbReference>
<dbReference type="GO" id="GO:0005737">
    <property type="term" value="C:cytoplasm"/>
    <property type="evidence" value="ECO:0007669"/>
    <property type="project" value="UniProtKB-SubCell"/>
</dbReference>
<dbReference type="GO" id="GO:0005524">
    <property type="term" value="F:ATP binding"/>
    <property type="evidence" value="ECO:0007669"/>
    <property type="project" value="UniProtKB-UniRule"/>
</dbReference>
<dbReference type="GO" id="GO:0004825">
    <property type="term" value="F:methionine-tRNA ligase activity"/>
    <property type="evidence" value="ECO:0007669"/>
    <property type="project" value="UniProtKB-UniRule"/>
</dbReference>
<dbReference type="GO" id="GO:0000049">
    <property type="term" value="F:tRNA binding"/>
    <property type="evidence" value="ECO:0007669"/>
    <property type="project" value="UniProtKB-KW"/>
</dbReference>
<dbReference type="GO" id="GO:0006431">
    <property type="term" value="P:methionyl-tRNA aminoacylation"/>
    <property type="evidence" value="ECO:0007669"/>
    <property type="project" value="UniProtKB-UniRule"/>
</dbReference>
<dbReference type="CDD" id="cd07957">
    <property type="entry name" value="Anticodon_Ia_Met"/>
    <property type="match status" value="1"/>
</dbReference>
<dbReference type="CDD" id="cd00814">
    <property type="entry name" value="MetRS_core"/>
    <property type="match status" value="1"/>
</dbReference>
<dbReference type="CDD" id="cd02800">
    <property type="entry name" value="tRNA_bind_EcMetRS_like"/>
    <property type="match status" value="1"/>
</dbReference>
<dbReference type="FunFam" id="1.10.730.10:FF:000026">
    <property type="entry name" value="Methionine--tRNA ligase"/>
    <property type="match status" value="1"/>
</dbReference>
<dbReference type="FunFam" id="2.170.220.10:FF:000002">
    <property type="entry name" value="Methionine--tRNA ligase"/>
    <property type="match status" value="1"/>
</dbReference>
<dbReference type="FunFam" id="2.40.50.140:FF:000042">
    <property type="entry name" value="Methionine--tRNA ligase"/>
    <property type="match status" value="1"/>
</dbReference>
<dbReference type="Gene3D" id="2.170.220.10">
    <property type="match status" value="1"/>
</dbReference>
<dbReference type="Gene3D" id="3.40.50.620">
    <property type="entry name" value="HUPs"/>
    <property type="match status" value="1"/>
</dbReference>
<dbReference type="Gene3D" id="1.10.730.10">
    <property type="entry name" value="Isoleucyl-tRNA Synthetase, Domain 1"/>
    <property type="match status" value="1"/>
</dbReference>
<dbReference type="Gene3D" id="2.40.50.140">
    <property type="entry name" value="Nucleic acid-binding proteins"/>
    <property type="match status" value="1"/>
</dbReference>
<dbReference type="HAMAP" id="MF_01228">
    <property type="entry name" value="Met_tRNA_synth_type2"/>
    <property type="match status" value="1"/>
</dbReference>
<dbReference type="InterPro" id="IPR041872">
    <property type="entry name" value="Anticodon_Met"/>
</dbReference>
<dbReference type="InterPro" id="IPR004495">
    <property type="entry name" value="Met-tRNA-synth_bsu_C"/>
</dbReference>
<dbReference type="InterPro" id="IPR014758">
    <property type="entry name" value="Met-tRNA_synth"/>
</dbReference>
<dbReference type="InterPro" id="IPR023457">
    <property type="entry name" value="Met-tRNA_synth_2"/>
</dbReference>
<dbReference type="InterPro" id="IPR015413">
    <property type="entry name" value="Methionyl/Leucyl_tRNA_Synth"/>
</dbReference>
<dbReference type="InterPro" id="IPR033911">
    <property type="entry name" value="MetRS_core"/>
</dbReference>
<dbReference type="InterPro" id="IPR012340">
    <property type="entry name" value="NA-bd_OB-fold"/>
</dbReference>
<dbReference type="InterPro" id="IPR014729">
    <property type="entry name" value="Rossmann-like_a/b/a_fold"/>
</dbReference>
<dbReference type="InterPro" id="IPR002547">
    <property type="entry name" value="tRNA-bd_dom"/>
</dbReference>
<dbReference type="InterPro" id="IPR009080">
    <property type="entry name" value="tRNAsynth_Ia_anticodon-bd"/>
</dbReference>
<dbReference type="NCBIfam" id="TIGR00398">
    <property type="entry name" value="metG"/>
    <property type="match status" value="1"/>
</dbReference>
<dbReference type="NCBIfam" id="TIGR00399">
    <property type="entry name" value="metG_C_term"/>
    <property type="match status" value="1"/>
</dbReference>
<dbReference type="NCBIfam" id="NF008900">
    <property type="entry name" value="PRK12267.1"/>
    <property type="match status" value="1"/>
</dbReference>
<dbReference type="PANTHER" id="PTHR43326:SF1">
    <property type="entry name" value="METHIONINE--TRNA LIGASE, MITOCHONDRIAL"/>
    <property type="match status" value="1"/>
</dbReference>
<dbReference type="PANTHER" id="PTHR43326">
    <property type="entry name" value="METHIONYL-TRNA SYNTHETASE"/>
    <property type="match status" value="1"/>
</dbReference>
<dbReference type="Pfam" id="PF19303">
    <property type="entry name" value="Anticodon_3"/>
    <property type="match status" value="1"/>
</dbReference>
<dbReference type="Pfam" id="PF09334">
    <property type="entry name" value="tRNA-synt_1g"/>
    <property type="match status" value="1"/>
</dbReference>
<dbReference type="Pfam" id="PF01588">
    <property type="entry name" value="tRNA_bind"/>
    <property type="match status" value="1"/>
</dbReference>
<dbReference type="PRINTS" id="PR01041">
    <property type="entry name" value="TRNASYNTHMET"/>
</dbReference>
<dbReference type="SUPFAM" id="SSF47323">
    <property type="entry name" value="Anticodon-binding domain of a subclass of class I aminoacyl-tRNA synthetases"/>
    <property type="match status" value="1"/>
</dbReference>
<dbReference type="SUPFAM" id="SSF50249">
    <property type="entry name" value="Nucleic acid-binding proteins"/>
    <property type="match status" value="1"/>
</dbReference>
<dbReference type="SUPFAM" id="SSF52374">
    <property type="entry name" value="Nucleotidylyl transferase"/>
    <property type="match status" value="1"/>
</dbReference>
<dbReference type="PROSITE" id="PS50886">
    <property type="entry name" value="TRBD"/>
    <property type="match status" value="1"/>
</dbReference>
<protein>
    <recommendedName>
        <fullName>Methionine--tRNA ligase</fullName>
        <ecNumber>6.1.1.10</ecNumber>
    </recommendedName>
    <alternativeName>
        <fullName>Methionyl-tRNA synthetase</fullName>
        <shortName>MetRS</shortName>
    </alternativeName>
</protein>
<comment type="function">
    <text evidence="1">Is required not only for elongation of protein synthesis but also for the initiation of all mRNA translation through initiator tRNA(fMet) aminoacylation.</text>
</comment>
<comment type="catalytic activity">
    <reaction>
        <text>tRNA(Met) + L-methionine + ATP = L-methionyl-tRNA(Met) + AMP + diphosphate</text>
        <dbReference type="Rhea" id="RHEA:13481"/>
        <dbReference type="Rhea" id="RHEA-COMP:9667"/>
        <dbReference type="Rhea" id="RHEA-COMP:9698"/>
        <dbReference type="ChEBI" id="CHEBI:30616"/>
        <dbReference type="ChEBI" id="CHEBI:33019"/>
        <dbReference type="ChEBI" id="CHEBI:57844"/>
        <dbReference type="ChEBI" id="CHEBI:78442"/>
        <dbReference type="ChEBI" id="CHEBI:78530"/>
        <dbReference type="ChEBI" id="CHEBI:456215"/>
        <dbReference type="EC" id="6.1.1.10"/>
    </reaction>
</comment>
<comment type="subunit">
    <text evidence="1">Homodimer.</text>
</comment>
<comment type="subcellular location">
    <subcellularLocation>
        <location evidence="1">Cytoplasm</location>
    </subcellularLocation>
</comment>
<comment type="similarity">
    <text evidence="2">Belongs to the class-I aminoacyl-tRNA synthetase family. MetG type 2B subfamily.</text>
</comment>
<organism>
    <name type="scientific">Streptococcus pneumoniae serotype 4 (strain ATCC BAA-334 / TIGR4)</name>
    <dbReference type="NCBI Taxonomy" id="170187"/>
    <lineage>
        <taxon>Bacteria</taxon>
        <taxon>Bacillati</taxon>
        <taxon>Bacillota</taxon>
        <taxon>Bacilli</taxon>
        <taxon>Lactobacillales</taxon>
        <taxon>Streptococcaceae</taxon>
        <taxon>Streptococcus</taxon>
    </lineage>
</organism>
<evidence type="ECO:0000250" key="1"/>
<evidence type="ECO:0000305" key="2"/>
<proteinExistence type="inferred from homology"/>
<feature type="chain" id="PRO_0000139250" description="Methionine--tRNA ligase">
    <location>
        <begin position="1"/>
        <end position="665"/>
    </location>
</feature>
<feature type="domain" description="tRNA-binding">
    <location>
        <begin position="562"/>
        <end position="665"/>
    </location>
</feature>
<feature type="short sequence motif" description="'HIGH' region">
    <location>
        <begin position="13"/>
        <end position="23"/>
    </location>
</feature>
<feature type="short sequence motif" description="'KMSKS' region">
    <location>
        <begin position="309"/>
        <end position="313"/>
    </location>
</feature>
<feature type="binding site" evidence="1">
    <location>
        <position position="312"/>
    </location>
    <ligand>
        <name>ATP</name>
        <dbReference type="ChEBI" id="CHEBI:30616"/>
    </ligand>
</feature>
<keyword id="KW-0030">Aminoacyl-tRNA synthetase</keyword>
<keyword id="KW-0067">ATP-binding</keyword>
<keyword id="KW-0963">Cytoplasm</keyword>
<keyword id="KW-0436">Ligase</keyword>
<keyword id="KW-0547">Nucleotide-binding</keyword>
<keyword id="KW-0648">Protein biosynthesis</keyword>
<keyword id="KW-1185">Reference proteome</keyword>
<keyword id="KW-0694">RNA-binding</keyword>
<keyword id="KW-0820">tRNA-binding</keyword>
<accession>P67580</accession>
<accession>Q97RL6</accession>